<keyword id="KW-0067">ATP-binding</keyword>
<keyword id="KW-0963">Cytoplasm</keyword>
<keyword id="KW-0460">Magnesium</keyword>
<keyword id="KW-0479">Metal-binding</keyword>
<keyword id="KW-0547">Nucleotide-binding</keyword>
<keyword id="KW-0554">One-carbon metabolism</keyword>
<keyword id="KW-0630">Potassium</keyword>
<keyword id="KW-0808">Transferase</keyword>
<comment type="function">
    <text evidence="1">Catalyzes the formation of S-adenosylmethionine (AdoMet) from methionine and ATP. The overall synthetic reaction is composed of two sequential steps, AdoMet formation and the subsequent tripolyphosphate hydrolysis which occurs prior to release of AdoMet from the enzyme.</text>
</comment>
<comment type="catalytic activity">
    <reaction evidence="1">
        <text>L-methionine + ATP + H2O = S-adenosyl-L-methionine + phosphate + diphosphate</text>
        <dbReference type="Rhea" id="RHEA:21080"/>
        <dbReference type="ChEBI" id="CHEBI:15377"/>
        <dbReference type="ChEBI" id="CHEBI:30616"/>
        <dbReference type="ChEBI" id="CHEBI:33019"/>
        <dbReference type="ChEBI" id="CHEBI:43474"/>
        <dbReference type="ChEBI" id="CHEBI:57844"/>
        <dbReference type="ChEBI" id="CHEBI:59789"/>
        <dbReference type="EC" id="2.5.1.6"/>
    </reaction>
</comment>
<comment type="cofactor">
    <cofactor evidence="1">
        <name>Mg(2+)</name>
        <dbReference type="ChEBI" id="CHEBI:18420"/>
    </cofactor>
    <text evidence="1">Binds 2 divalent ions per subunit.</text>
</comment>
<comment type="cofactor">
    <cofactor evidence="1">
        <name>K(+)</name>
        <dbReference type="ChEBI" id="CHEBI:29103"/>
    </cofactor>
    <text evidence="1">Binds 1 potassium ion per subunit.</text>
</comment>
<comment type="pathway">
    <text evidence="1">Amino-acid biosynthesis; S-adenosyl-L-methionine biosynthesis; S-adenosyl-L-methionine from L-methionine: step 1/1.</text>
</comment>
<comment type="subunit">
    <text evidence="1">Homotetramer; dimer of dimers.</text>
</comment>
<comment type="subcellular location">
    <subcellularLocation>
        <location evidence="1">Cytoplasm</location>
    </subcellularLocation>
</comment>
<comment type="similarity">
    <text evidence="1">Belongs to the AdoMet synthase family.</text>
</comment>
<gene>
    <name evidence="1" type="primary">metK</name>
    <name type="ordered locus">XAC0813</name>
</gene>
<proteinExistence type="inferred from homology"/>
<protein>
    <recommendedName>
        <fullName evidence="1">S-adenosylmethionine synthase</fullName>
        <shortName evidence="1">AdoMet synthase</shortName>
        <ecNumber evidence="1">2.5.1.6</ecNumber>
    </recommendedName>
    <alternativeName>
        <fullName evidence="1">MAT</fullName>
    </alternativeName>
    <alternativeName>
        <fullName evidence="1">Methionine adenosyltransferase</fullName>
    </alternativeName>
</protein>
<name>METK_XANAC</name>
<dbReference type="EC" id="2.5.1.6" evidence="1"/>
<dbReference type="EMBL" id="AE008923">
    <property type="protein sequence ID" value="AAM35701.1"/>
    <property type="molecule type" value="Genomic_DNA"/>
</dbReference>
<dbReference type="RefSeq" id="WP_005910819.1">
    <property type="nucleotide sequence ID" value="NC_003919.1"/>
</dbReference>
<dbReference type="SMR" id="Q8PP75"/>
<dbReference type="GeneID" id="97509197"/>
<dbReference type="KEGG" id="xac:XAC0813"/>
<dbReference type="eggNOG" id="COG0192">
    <property type="taxonomic scope" value="Bacteria"/>
</dbReference>
<dbReference type="HOGENOM" id="CLU_041802_1_1_6"/>
<dbReference type="UniPathway" id="UPA00315">
    <property type="reaction ID" value="UER00080"/>
</dbReference>
<dbReference type="Proteomes" id="UP000000576">
    <property type="component" value="Chromosome"/>
</dbReference>
<dbReference type="GO" id="GO:0005737">
    <property type="term" value="C:cytoplasm"/>
    <property type="evidence" value="ECO:0007669"/>
    <property type="project" value="UniProtKB-SubCell"/>
</dbReference>
<dbReference type="GO" id="GO:0005524">
    <property type="term" value="F:ATP binding"/>
    <property type="evidence" value="ECO:0007669"/>
    <property type="project" value="UniProtKB-UniRule"/>
</dbReference>
<dbReference type="GO" id="GO:0000287">
    <property type="term" value="F:magnesium ion binding"/>
    <property type="evidence" value="ECO:0007669"/>
    <property type="project" value="UniProtKB-UniRule"/>
</dbReference>
<dbReference type="GO" id="GO:0004478">
    <property type="term" value="F:methionine adenosyltransferase activity"/>
    <property type="evidence" value="ECO:0007669"/>
    <property type="project" value="UniProtKB-UniRule"/>
</dbReference>
<dbReference type="GO" id="GO:0006730">
    <property type="term" value="P:one-carbon metabolic process"/>
    <property type="evidence" value="ECO:0007669"/>
    <property type="project" value="UniProtKB-KW"/>
</dbReference>
<dbReference type="GO" id="GO:0006556">
    <property type="term" value="P:S-adenosylmethionine biosynthetic process"/>
    <property type="evidence" value="ECO:0007669"/>
    <property type="project" value="UniProtKB-UniRule"/>
</dbReference>
<dbReference type="CDD" id="cd18079">
    <property type="entry name" value="S-AdoMet_synt"/>
    <property type="match status" value="1"/>
</dbReference>
<dbReference type="FunFam" id="3.30.300.10:FF:000003">
    <property type="entry name" value="S-adenosylmethionine synthase"/>
    <property type="match status" value="1"/>
</dbReference>
<dbReference type="FunFam" id="3.30.300.10:FF:000004">
    <property type="entry name" value="S-adenosylmethionine synthase"/>
    <property type="match status" value="1"/>
</dbReference>
<dbReference type="Gene3D" id="3.30.300.10">
    <property type="match status" value="3"/>
</dbReference>
<dbReference type="HAMAP" id="MF_00086">
    <property type="entry name" value="S_AdoMet_synth1"/>
    <property type="match status" value="1"/>
</dbReference>
<dbReference type="InterPro" id="IPR022631">
    <property type="entry name" value="ADOMET_SYNTHASE_CS"/>
</dbReference>
<dbReference type="InterPro" id="IPR022630">
    <property type="entry name" value="S-AdoMet_synt_C"/>
</dbReference>
<dbReference type="InterPro" id="IPR022629">
    <property type="entry name" value="S-AdoMet_synt_central"/>
</dbReference>
<dbReference type="InterPro" id="IPR022628">
    <property type="entry name" value="S-AdoMet_synt_N"/>
</dbReference>
<dbReference type="InterPro" id="IPR002133">
    <property type="entry name" value="S-AdoMet_synthetase"/>
</dbReference>
<dbReference type="InterPro" id="IPR022636">
    <property type="entry name" value="S-AdoMet_synthetase_sfam"/>
</dbReference>
<dbReference type="NCBIfam" id="TIGR01034">
    <property type="entry name" value="metK"/>
    <property type="match status" value="1"/>
</dbReference>
<dbReference type="PANTHER" id="PTHR11964">
    <property type="entry name" value="S-ADENOSYLMETHIONINE SYNTHETASE"/>
    <property type="match status" value="1"/>
</dbReference>
<dbReference type="Pfam" id="PF02773">
    <property type="entry name" value="S-AdoMet_synt_C"/>
    <property type="match status" value="1"/>
</dbReference>
<dbReference type="Pfam" id="PF02772">
    <property type="entry name" value="S-AdoMet_synt_M"/>
    <property type="match status" value="1"/>
</dbReference>
<dbReference type="Pfam" id="PF00438">
    <property type="entry name" value="S-AdoMet_synt_N"/>
    <property type="match status" value="1"/>
</dbReference>
<dbReference type="PIRSF" id="PIRSF000497">
    <property type="entry name" value="MAT"/>
    <property type="match status" value="1"/>
</dbReference>
<dbReference type="SUPFAM" id="SSF55973">
    <property type="entry name" value="S-adenosylmethionine synthetase"/>
    <property type="match status" value="3"/>
</dbReference>
<dbReference type="PROSITE" id="PS00376">
    <property type="entry name" value="ADOMET_SYNTHASE_1"/>
    <property type="match status" value="1"/>
</dbReference>
<dbReference type="PROSITE" id="PS00377">
    <property type="entry name" value="ADOMET_SYNTHASE_2"/>
    <property type="match status" value="1"/>
</dbReference>
<organism>
    <name type="scientific">Xanthomonas axonopodis pv. citri (strain 306)</name>
    <dbReference type="NCBI Taxonomy" id="190486"/>
    <lineage>
        <taxon>Bacteria</taxon>
        <taxon>Pseudomonadati</taxon>
        <taxon>Pseudomonadota</taxon>
        <taxon>Gammaproteobacteria</taxon>
        <taxon>Lysobacterales</taxon>
        <taxon>Lysobacteraceae</taxon>
        <taxon>Xanthomonas</taxon>
    </lineage>
</organism>
<reference key="1">
    <citation type="journal article" date="2002" name="Nature">
        <title>Comparison of the genomes of two Xanthomonas pathogens with differing host specificities.</title>
        <authorList>
            <person name="da Silva A.C.R."/>
            <person name="Ferro J.A."/>
            <person name="Reinach F.C."/>
            <person name="Farah C.S."/>
            <person name="Furlan L.R."/>
            <person name="Quaggio R.B."/>
            <person name="Monteiro-Vitorello C.B."/>
            <person name="Van Sluys M.A."/>
            <person name="Almeida N.F. Jr."/>
            <person name="Alves L.M.C."/>
            <person name="do Amaral A.M."/>
            <person name="Bertolini M.C."/>
            <person name="Camargo L.E.A."/>
            <person name="Camarotte G."/>
            <person name="Cannavan F."/>
            <person name="Cardozo J."/>
            <person name="Chambergo F."/>
            <person name="Ciapina L.P."/>
            <person name="Cicarelli R.M.B."/>
            <person name="Coutinho L.L."/>
            <person name="Cursino-Santos J.R."/>
            <person name="El-Dorry H."/>
            <person name="Faria J.B."/>
            <person name="Ferreira A.J.S."/>
            <person name="Ferreira R.C.C."/>
            <person name="Ferro M.I.T."/>
            <person name="Formighieri E.F."/>
            <person name="Franco M.C."/>
            <person name="Greggio C.C."/>
            <person name="Gruber A."/>
            <person name="Katsuyama A.M."/>
            <person name="Kishi L.T."/>
            <person name="Leite R.P."/>
            <person name="Lemos E.G.M."/>
            <person name="Lemos M.V.F."/>
            <person name="Locali E.C."/>
            <person name="Machado M.A."/>
            <person name="Madeira A.M.B.N."/>
            <person name="Martinez-Rossi N.M."/>
            <person name="Martins E.C."/>
            <person name="Meidanis J."/>
            <person name="Menck C.F.M."/>
            <person name="Miyaki C.Y."/>
            <person name="Moon D.H."/>
            <person name="Moreira L.M."/>
            <person name="Novo M.T.M."/>
            <person name="Okura V.K."/>
            <person name="Oliveira M.C."/>
            <person name="Oliveira V.R."/>
            <person name="Pereira H.A."/>
            <person name="Rossi A."/>
            <person name="Sena J.A.D."/>
            <person name="Silva C."/>
            <person name="de Souza R.F."/>
            <person name="Spinola L.A.F."/>
            <person name="Takita M.A."/>
            <person name="Tamura R.E."/>
            <person name="Teixeira E.C."/>
            <person name="Tezza R.I.D."/>
            <person name="Trindade dos Santos M."/>
            <person name="Truffi D."/>
            <person name="Tsai S.M."/>
            <person name="White F.F."/>
            <person name="Setubal J.C."/>
            <person name="Kitajima J.P."/>
        </authorList>
    </citation>
    <scope>NUCLEOTIDE SEQUENCE [LARGE SCALE GENOMIC DNA]</scope>
    <source>
        <strain>306</strain>
    </source>
</reference>
<feature type="chain" id="PRO_0000174626" description="S-adenosylmethionine synthase">
    <location>
        <begin position="1"/>
        <end position="403"/>
    </location>
</feature>
<feature type="region of interest" description="Flexible loop" evidence="1">
    <location>
        <begin position="99"/>
        <end position="109"/>
    </location>
</feature>
<feature type="binding site" description="in other chain" evidence="1">
    <location>
        <position position="15"/>
    </location>
    <ligand>
        <name>ATP</name>
        <dbReference type="ChEBI" id="CHEBI:30616"/>
        <note>ligand shared between two neighboring subunits</note>
    </ligand>
</feature>
<feature type="binding site" evidence="1">
    <location>
        <position position="17"/>
    </location>
    <ligand>
        <name>Mg(2+)</name>
        <dbReference type="ChEBI" id="CHEBI:18420"/>
    </ligand>
</feature>
<feature type="binding site" evidence="1">
    <location>
        <position position="43"/>
    </location>
    <ligand>
        <name>K(+)</name>
        <dbReference type="ChEBI" id="CHEBI:29103"/>
    </ligand>
</feature>
<feature type="binding site" description="in other chain" evidence="1">
    <location>
        <position position="56"/>
    </location>
    <ligand>
        <name>L-methionine</name>
        <dbReference type="ChEBI" id="CHEBI:57844"/>
        <note>ligand shared between two neighboring subunits</note>
    </ligand>
</feature>
<feature type="binding site" description="in other chain" evidence="1">
    <location>
        <position position="99"/>
    </location>
    <ligand>
        <name>L-methionine</name>
        <dbReference type="ChEBI" id="CHEBI:57844"/>
        <note>ligand shared between two neighboring subunits</note>
    </ligand>
</feature>
<feature type="binding site" description="in other chain" evidence="1">
    <location>
        <begin position="166"/>
        <end position="168"/>
    </location>
    <ligand>
        <name>ATP</name>
        <dbReference type="ChEBI" id="CHEBI:30616"/>
        <note>ligand shared between two neighboring subunits</note>
    </ligand>
</feature>
<feature type="binding site" description="in other chain" evidence="1">
    <location>
        <begin position="232"/>
        <end position="233"/>
    </location>
    <ligand>
        <name>ATP</name>
        <dbReference type="ChEBI" id="CHEBI:30616"/>
        <note>ligand shared between two neighboring subunits</note>
    </ligand>
</feature>
<feature type="binding site" evidence="1">
    <location>
        <position position="241"/>
    </location>
    <ligand>
        <name>ATP</name>
        <dbReference type="ChEBI" id="CHEBI:30616"/>
        <note>ligand shared between two neighboring subunits</note>
    </ligand>
</feature>
<feature type="binding site" evidence="1">
    <location>
        <position position="241"/>
    </location>
    <ligand>
        <name>L-methionine</name>
        <dbReference type="ChEBI" id="CHEBI:57844"/>
        <note>ligand shared between two neighboring subunits</note>
    </ligand>
</feature>
<feature type="binding site" description="in other chain" evidence="1">
    <location>
        <begin position="247"/>
        <end position="248"/>
    </location>
    <ligand>
        <name>ATP</name>
        <dbReference type="ChEBI" id="CHEBI:30616"/>
        <note>ligand shared between two neighboring subunits</note>
    </ligand>
</feature>
<feature type="binding site" evidence="1">
    <location>
        <position position="264"/>
    </location>
    <ligand>
        <name>ATP</name>
        <dbReference type="ChEBI" id="CHEBI:30616"/>
        <note>ligand shared between two neighboring subunits</note>
    </ligand>
</feature>
<feature type="binding site" evidence="1">
    <location>
        <position position="268"/>
    </location>
    <ligand>
        <name>ATP</name>
        <dbReference type="ChEBI" id="CHEBI:30616"/>
        <note>ligand shared between two neighboring subunits</note>
    </ligand>
</feature>
<feature type="binding site" description="in other chain" evidence="1">
    <location>
        <position position="272"/>
    </location>
    <ligand>
        <name>L-methionine</name>
        <dbReference type="ChEBI" id="CHEBI:57844"/>
        <note>ligand shared between two neighboring subunits</note>
    </ligand>
</feature>
<accession>Q8PP75</accession>
<sequence>MSSYLFTSESVSEGHPDKIADQISDAVLDAILAQDKRARVACETMVKTGVAIVAGEVTTSAWIDLEALTRKVILDIGYNSSDVGFDGETCGVLNLIGKQSPDINQGVDRKNPEQQGAGDQGLMFGYATNETDSFMPAAIHLSHRLVEQQAKIRKKKNSALSWLRPDAKSQVTLRYEDGVATAIDAVVLSTQHDPGVKQKDLIEAVREEILKPVLPAKWLHKGTKFHINPTGKFVIGGPVGDCGLTGRKIIVDTYGGWARHGGGAFSGKDPSKVDRSAAYAARYVAKNVVAAGLADRCEVQVSYAIGVAEPTSISVTTFGTGKIADEQIEKLIRKHFDLRPFGIIQMLDLIHPMYQQTASYGHFGRKPKDFTYTDGTGAQHSATSFSWEKTDRADALRAAAKLK</sequence>
<evidence type="ECO:0000255" key="1">
    <source>
        <dbReference type="HAMAP-Rule" id="MF_00086"/>
    </source>
</evidence>